<proteinExistence type="inferred from homology"/>
<protein>
    <recommendedName>
        <fullName evidence="1">S-adenosylmethionine:tRNA ribosyltransferase-isomerase</fullName>
        <ecNumber evidence="1">2.4.99.17</ecNumber>
    </recommendedName>
    <alternativeName>
        <fullName evidence="1">Queuosine biosynthesis protein QueA</fullName>
    </alternativeName>
</protein>
<organism>
    <name type="scientific">Chlorobium luteolum (strain DSM 273 / BCRC 81028 / 2530)</name>
    <name type="common">Pelodictyon luteolum</name>
    <dbReference type="NCBI Taxonomy" id="319225"/>
    <lineage>
        <taxon>Bacteria</taxon>
        <taxon>Pseudomonadati</taxon>
        <taxon>Chlorobiota</taxon>
        <taxon>Chlorobiia</taxon>
        <taxon>Chlorobiales</taxon>
        <taxon>Chlorobiaceae</taxon>
        <taxon>Chlorobium/Pelodictyon group</taxon>
        <taxon>Pelodictyon</taxon>
    </lineage>
</organism>
<keyword id="KW-0963">Cytoplasm</keyword>
<keyword id="KW-0671">Queuosine biosynthesis</keyword>
<keyword id="KW-1185">Reference proteome</keyword>
<keyword id="KW-0949">S-adenosyl-L-methionine</keyword>
<keyword id="KW-0808">Transferase</keyword>
<comment type="function">
    <text evidence="1">Transfers and isomerizes the ribose moiety from AdoMet to the 7-aminomethyl group of 7-deazaguanine (preQ1-tRNA) to give epoxyqueuosine (oQ-tRNA).</text>
</comment>
<comment type="catalytic activity">
    <reaction evidence="1">
        <text>7-aminomethyl-7-carbaguanosine(34) in tRNA + S-adenosyl-L-methionine = epoxyqueuosine(34) in tRNA + adenine + L-methionine + 2 H(+)</text>
        <dbReference type="Rhea" id="RHEA:32155"/>
        <dbReference type="Rhea" id="RHEA-COMP:10342"/>
        <dbReference type="Rhea" id="RHEA-COMP:18582"/>
        <dbReference type="ChEBI" id="CHEBI:15378"/>
        <dbReference type="ChEBI" id="CHEBI:16708"/>
        <dbReference type="ChEBI" id="CHEBI:57844"/>
        <dbReference type="ChEBI" id="CHEBI:59789"/>
        <dbReference type="ChEBI" id="CHEBI:82833"/>
        <dbReference type="ChEBI" id="CHEBI:194443"/>
        <dbReference type="EC" id="2.4.99.17"/>
    </reaction>
</comment>
<comment type="pathway">
    <text evidence="1">tRNA modification; tRNA-queuosine biosynthesis.</text>
</comment>
<comment type="subunit">
    <text evidence="1">Monomer.</text>
</comment>
<comment type="subcellular location">
    <subcellularLocation>
        <location evidence="1">Cytoplasm</location>
    </subcellularLocation>
</comment>
<comment type="similarity">
    <text evidence="1">Belongs to the QueA family.</text>
</comment>
<reference key="1">
    <citation type="submission" date="2005-08" db="EMBL/GenBank/DDBJ databases">
        <title>Complete sequence of Pelodictyon luteolum DSM 273.</title>
        <authorList>
            <consortium name="US DOE Joint Genome Institute"/>
            <person name="Copeland A."/>
            <person name="Lucas S."/>
            <person name="Lapidus A."/>
            <person name="Barry K."/>
            <person name="Detter J.C."/>
            <person name="Glavina T."/>
            <person name="Hammon N."/>
            <person name="Israni S."/>
            <person name="Pitluck S."/>
            <person name="Bryant D."/>
            <person name="Schmutz J."/>
            <person name="Larimer F."/>
            <person name="Land M."/>
            <person name="Kyrpides N."/>
            <person name="Ivanova N."/>
            <person name="Richardson P."/>
        </authorList>
    </citation>
    <scope>NUCLEOTIDE SEQUENCE [LARGE SCALE GENOMIC DNA]</scope>
    <source>
        <strain>DSM 273 / BCRC 81028 / 2530</strain>
    </source>
</reference>
<sequence length="341" mass="37865">MRVADFDYPLPEERIAKYPPLQRGSTRLLVICREGGTVSHARYRELDTFLRKGDLLVLNNTRVVKARLMAEKSTGAAIELMLLEKHGQEQSLVLFRGRVKQGDRLRSHGHEFLVEEIVDHGVARLSLPEGRSIQPVFEAHAEVPIPPYLRRPAEPVDRERYQTVFAEHAGSVAAPTASLNMTPELLLRLRDGGVETSSITLHVGLGTFLPIRVDSMEEHVMHREFYSIPAATIEKIRATKASGGRIIALGTTVTRALEHAALSLSGHSGPGPLEGEADIFIYPGCSFRLIDALLTNFHAPRSTVLMLTAAFAGPDLLRRAYREALDKEYRFLSYGDSTLIL</sequence>
<name>QUEA_CHLL3</name>
<feature type="chain" id="PRO_0000231355" description="S-adenosylmethionine:tRNA ribosyltransferase-isomerase">
    <location>
        <begin position="1"/>
        <end position="341"/>
    </location>
</feature>
<gene>
    <name evidence="1" type="primary">queA</name>
    <name type="ordered locus">Plut_0555</name>
</gene>
<dbReference type="EC" id="2.4.99.17" evidence="1"/>
<dbReference type="EMBL" id="CP000096">
    <property type="protein sequence ID" value="ABB23439.1"/>
    <property type="molecule type" value="Genomic_DNA"/>
</dbReference>
<dbReference type="RefSeq" id="WP_011357314.1">
    <property type="nucleotide sequence ID" value="NC_007512.1"/>
</dbReference>
<dbReference type="SMR" id="Q3B5E2"/>
<dbReference type="STRING" id="319225.Plut_0555"/>
<dbReference type="KEGG" id="plt:Plut_0555"/>
<dbReference type="eggNOG" id="COG0809">
    <property type="taxonomic scope" value="Bacteria"/>
</dbReference>
<dbReference type="HOGENOM" id="CLU_039110_1_0_10"/>
<dbReference type="OrthoDB" id="9805933at2"/>
<dbReference type="UniPathway" id="UPA00392"/>
<dbReference type="Proteomes" id="UP000002709">
    <property type="component" value="Chromosome"/>
</dbReference>
<dbReference type="GO" id="GO:0005737">
    <property type="term" value="C:cytoplasm"/>
    <property type="evidence" value="ECO:0007669"/>
    <property type="project" value="UniProtKB-SubCell"/>
</dbReference>
<dbReference type="GO" id="GO:0051075">
    <property type="term" value="F:S-adenosylmethionine:tRNA ribosyltransferase-isomerase activity"/>
    <property type="evidence" value="ECO:0007669"/>
    <property type="project" value="UniProtKB-EC"/>
</dbReference>
<dbReference type="GO" id="GO:0008616">
    <property type="term" value="P:queuosine biosynthetic process"/>
    <property type="evidence" value="ECO:0007669"/>
    <property type="project" value="UniProtKB-UniRule"/>
</dbReference>
<dbReference type="GO" id="GO:0002099">
    <property type="term" value="P:tRNA wobble guanine modification"/>
    <property type="evidence" value="ECO:0007669"/>
    <property type="project" value="TreeGrafter"/>
</dbReference>
<dbReference type="Gene3D" id="2.40.10.240">
    <property type="entry name" value="QueA-like"/>
    <property type="match status" value="1"/>
</dbReference>
<dbReference type="Gene3D" id="3.40.1780.10">
    <property type="entry name" value="QueA-like"/>
    <property type="match status" value="1"/>
</dbReference>
<dbReference type="HAMAP" id="MF_00113">
    <property type="entry name" value="QueA"/>
    <property type="match status" value="1"/>
</dbReference>
<dbReference type="InterPro" id="IPR003699">
    <property type="entry name" value="QueA"/>
</dbReference>
<dbReference type="InterPro" id="IPR042118">
    <property type="entry name" value="QueA_dom1"/>
</dbReference>
<dbReference type="InterPro" id="IPR042119">
    <property type="entry name" value="QueA_dom2"/>
</dbReference>
<dbReference type="InterPro" id="IPR036100">
    <property type="entry name" value="QueA_sf"/>
</dbReference>
<dbReference type="NCBIfam" id="NF001140">
    <property type="entry name" value="PRK00147.1"/>
    <property type="match status" value="1"/>
</dbReference>
<dbReference type="NCBIfam" id="TIGR00113">
    <property type="entry name" value="queA"/>
    <property type="match status" value="1"/>
</dbReference>
<dbReference type="PANTHER" id="PTHR30307">
    <property type="entry name" value="S-ADENOSYLMETHIONINE:TRNA RIBOSYLTRANSFERASE-ISOMERASE"/>
    <property type="match status" value="1"/>
</dbReference>
<dbReference type="PANTHER" id="PTHR30307:SF0">
    <property type="entry name" value="S-ADENOSYLMETHIONINE:TRNA RIBOSYLTRANSFERASE-ISOMERASE"/>
    <property type="match status" value="1"/>
</dbReference>
<dbReference type="Pfam" id="PF02547">
    <property type="entry name" value="Queuosine_synth"/>
    <property type="match status" value="1"/>
</dbReference>
<dbReference type="SUPFAM" id="SSF111337">
    <property type="entry name" value="QueA-like"/>
    <property type="match status" value="1"/>
</dbReference>
<accession>Q3B5E2</accession>
<evidence type="ECO:0000255" key="1">
    <source>
        <dbReference type="HAMAP-Rule" id="MF_00113"/>
    </source>
</evidence>